<feature type="chain" id="PRO_0000366345" description="Eukaryotic translation initiation factor 3 subunit A">
    <location>
        <begin position="1"/>
        <end position="1137"/>
    </location>
</feature>
<feature type="domain" description="PCI" evidence="2">
    <location>
        <begin position="319"/>
        <end position="501"/>
    </location>
</feature>
<feature type="region of interest" description="Disordered" evidence="3">
    <location>
        <begin position="588"/>
        <end position="631"/>
    </location>
</feature>
<feature type="region of interest" description="Disordered" evidence="3">
    <location>
        <begin position="829"/>
        <end position="1137"/>
    </location>
</feature>
<feature type="compositionally biased region" description="Basic and acidic residues" evidence="3">
    <location>
        <begin position="588"/>
        <end position="623"/>
    </location>
</feature>
<feature type="compositionally biased region" description="Basic and acidic residues" evidence="3">
    <location>
        <begin position="829"/>
        <end position="899"/>
    </location>
</feature>
<feature type="compositionally biased region" description="Basic and acidic residues" evidence="3">
    <location>
        <begin position="922"/>
        <end position="971"/>
    </location>
</feature>
<feature type="compositionally biased region" description="Basic and acidic residues" evidence="3">
    <location>
        <begin position="985"/>
        <end position="1046"/>
    </location>
</feature>
<feature type="compositionally biased region" description="Basic and acidic residues" evidence="3">
    <location>
        <begin position="1054"/>
        <end position="1083"/>
    </location>
</feature>
<feature type="compositionally biased region" description="Basic and acidic residues" evidence="3">
    <location>
        <begin position="1106"/>
        <end position="1127"/>
    </location>
</feature>
<feature type="modified residue" description="Phosphoserine" evidence="1">
    <location>
        <position position="908"/>
    </location>
</feature>
<sequence>MARYTQRPENALKRANEFIEVGKPLRALDTLQEVFRNKRWNYAYSETVIEPLMFKYLYLCVELKKSHIAKEGLFQYRNMFQLVNVNSLENVIRGYLKMAEEHTEAAQAQSSAAVAVLELDDLDNIATPESILMSAVCGEDAQDRSDRTILLPWVKFLWESYCQCLELLRVNTHCEALYHDIARMAFHFCLKYNRKSEFRRLCDKLRKHLEDICKSSNQTTGVSINKVETQQLCLDTRLYLLDSAIQMELWQEAYRAIEDIHGLMALSKKTPVPKTMANYYQKLAMVFSKAGNQLFHAAALLKLFQLTRELKKNLTKDDLQRMAAHVLLATLSIPLPSAHPEFDRFIEADKSPLEKAQKLAVLLGLPQPPTRVSLIREVVRLNVPQLVSEDFRNLYNWLEVDFNPLNLCKRIQSIVDFIENGPENALLTPYIQSLKDVTIMRLIRQISQVYESIEFQRLMQLASFCNIFELEKLLVESVRHNDMQIRIDHQKNSIYFGTDLTESQREYRPDGPALQSMPSEQIRSQLVNMSTVLTRAVSIVYPNRERDQRAKLRTQMVNHYHEIKDREHQRILQRQKIIEDRKEYIEKQNNAREEEEARRQEEESRKAKLAEQKRLEQEQEERERKRHQNEIQAIREKSLKEKVQQISQTAHGKKMLSKLDEEGIKKLDAEQIAKRESEELQREAKELQSKLKSQEKKIDYFERAKRLEEIPLFEKYLAEKQVKDKEFWEATEKTRIENAIAERKDAVGQQERLKRMYPDRDEFLDALKKERASLYVEKLKKFEAALEAERKKRLADRIIRRREERRQAFLREKEEERLRKEEEIRLAQAAEERAAAEARRLEREAEDEKRRAQYEKQRAKEEEAERKIKEDRERLARELASERERTEKERDTWRPRGGDRPSAPSGGSGEWRRGAPTVNNERGIERGGDRIERGGDRIERGGERIERGGDRDRKDNEGADSSWRVRREPDSQRAAAPKDSGAPQSRDEKWRRGGERDRDFRNDGARRDRDDGPRRDRDDGPRRDRDDERSGFRRNDGPRRTEEPQRETGGNWRDAPRHADRENRRTAGGERRDRDVRETRGDQRGPAPKEAVSSGGGGNWRTTPAAREEKPATKRDQPQEKENKAADDGEWTSVKRR</sequence>
<dbReference type="EMBL" id="CM000160">
    <property type="protein sequence ID" value="EDW95662.1"/>
    <property type="molecule type" value="Genomic_DNA"/>
</dbReference>
<dbReference type="SMR" id="B4PTS9"/>
<dbReference type="EnsemblMetazoa" id="FBtr0271868">
    <property type="protein sequence ID" value="FBpp0270360"/>
    <property type="gene ID" value="FBgn0242428"/>
</dbReference>
<dbReference type="EnsemblMetazoa" id="XM_002095914.3">
    <property type="protein sequence ID" value="XP_002095950.1"/>
    <property type="gene ID" value="LOC6535294"/>
</dbReference>
<dbReference type="GeneID" id="6535294"/>
<dbReference type="KEGG" id="dya:Dyak_GE25350"/>
<dbReference type="CTD" id="8661"/>
<dbReference type="eggNOG" id="KOG2072">
    <property type="taxonomic scope" value="Eukaryota"/>
</dbReference>
<dbReference type="HOGENOM" id="CLU_002096_1_1_1"/>
<dbReference type="OMA" id="EHITNKR"/>
<dbReference type="OrthoDB" id="18884at2759"/>
<dbReference type="PhylomeDB" id="B4PTS9"/>
<dbReference type="ChiTaRS" id="eIF3-S10">
    <property type="organism name" value="fly"/>
</dbReference>
<dbReference type="Proteomes" id="UP000002282">
    <property type="component" value="Chromosome 3R"/>
</dbReference>
<dbReference type="GO" id="GO:0016282">
    <property type="term" value="C:eukaryotic 43S preinitiation complex"/>
    <property type="evidence" value="ECO:0007669"/>
    <property type="project" value="UniProtKB-UniRule"/>
</dbReference>
<dbReference type="GO" id="GO:0033290">
    <property type="term" value="C:eukaryotic 48S preinitiation complex"/>
    <property type="evidence" value="ECO:0007669"/>
    <property type="project" value="UniProtKB-UniRule"/>
</dbReference>
<dbReference type="GO" id="GO:0005852">
    <property type="term" value="C:eukaryotic translation initiation factor 3 complex"/>
    <property type="evidence" value="ECO:0000250"/>
    <property type="project" value="UniProtKB"/>
</dbReference>
<dbReference type="GO" id="GO:0071540">
    <property type="term" value="C:eukaryotic translation initiation factor 3 complex, eIF3e"/>
    <property type="evidence" value="ECO:0007669"/>
    <property type="project" value="TreeGrafter"/>
</dbReference>
<dbReference type="GO" id="GO:0071541">
    <property type="term" value="C:eukaryotic translation initiation factor 3 complex, eIF3m"/>
    <property type="evidence" value="ECO:0007669"/>
    <property type="project" value="TreeGrafter"/>
</dbReference>
<dbReference type="GO" id="GO:0043614">
    <property type="term" value="C:multi-eIF complex"/>
    <property type="evidence" value="ECO:0007669"/>
    <property type="project" value="TreeGrafter"/>
</dbReference>
<dbReference type="GO" id="GO:0003729">
    <property type="term" value="F:mRNA binding"/>
    <property type="evidence" value="ECO:0007669"/>
    <property type="project" value="TreeGrafter"/>
</dbReference>
<dbReference type="GO" id="GO:0003743">
    <property type="term" value="F:translation initiation factor activity"/>
    <property type="evidence" value="ECO:0000250"/>
    <property type="project" value="UniProtKB"/>
</dbReference>
<dbReference type="GO" id="GO:0001732">
    <property type="term" value="P:formation of cytoplasmic translation initiation complex"/>
    <property type="evidence" value="ECO:0007669"/>
    <property type="project" value="UniProtKB-UniRule"/>
</dbReference>
<dbReference type="GO" id="GO:0006446">
    <property type="term" value="P:regulation of translational initiation"/>
    <property type="evidence" value="ECO:0000250"/>
    <property type="project" value="UniProtKB"/>
</dbReference>
<dbReference type="GO" id="GO:0002188">
    <property type="term" value="P:translation reinitiation"/>
    <property type="evidence" value="ECO:0007669"/>
    <property type="project" value="TreeGrafter"/>
</dbReference>
<dbReference type="FunFam" id="1.25.40.860:FF:000007">
    <property type="entry name" value="Eukaryotic translation initiation factor 3 subunit A"/>
    <property type="match status" value="1"/>
</dbReference>
<dbReference type="FunFam" id="4.10.860.10:FF:000001">
    <property type="entry name" value="Eukaryotic translation initiation factor 3 subunit A"/>
    <property type="match status" value="1"/>
</dbReference>
<dbReference type="Gene3D" id="1.25.40.860">
    <property type="match status" value="2"/>
</dbReference>
<dbReference type="Gene3D" id="4.10.860.10">
    <property type="entry name" value="UVR domain"/>
    <property type="match status" value="1"/>
</dbReference>
<dbReference type="HAMAP" id="MF_03000">
    <property type="entry name" value="eIF3a"/>
    <property type="match status" value="1"/>
</dbReference>
<dbReference type="InterPro" id="IPR027512">
    <property type="entry name" value="EIF3A"/>
</dbReference>
<dbReference type="InterPro" id="IPR054711">
    <property type="entry name" value="eIF3a_PCI_TPR-like"/>
</dbReference>
<dbReference type="InterPro" id="IPR000717">
    <property type="entry name" value="PCI_dom"/>
</dbReference>
<dbReference type="PANTHER" id="PTHR14005:SF0">
    <property type="entry name" value="EUKARYOTIC TRANSLATION INITIATION FACTOR 3 SUBUNIT A"/>
    <property type="match status" value="1"/>
</dbReference>
<dbReference type="PANTHER" id="PTHR14005">
    <property type="entry name" value="EUKARYOTIC TRANSLATION INITIATION FACTOR 3, THETA SUBUNIT"/>
    <property type="match status" value="1"/>
</dbReference>
<dbReference type="Pfam" id="PF22591">
    <property type="entry name" value="eIF3a_PCI_TPR-like"/>
    <property type="match status" value="1"/>
</dbReference>
<dbReference type="Pfam" id="PF01399">
    <property type="entry name" value="PCI"/>
    <property type="match status" value="1"/>
</dbReference>
<dbReference type="SMART" id="SM00088">
    <property type="entry name" value="PINT"/>
    <property type="match status" value="1"/>
</dbReference>
<dbReference type="PROSITE" id="PS50250">
    <property type="entry name" value="PCI"/>
    <property type="match status" value="1"/>
</dbReference>
<comment type="function">
    <text evidence="1">RNA-binding component of the eukaryotic translation initiation factor 3 (eIF-3) complex, which is involved in protein synthesis of a specialized repertoire of mRNAs and, together with other initiation factors, stimulates binding of mRNA and methionyl-tRNAi to the 40S ribosome. The eIF-3 complex specifically targets and initiates translation of a subset of mRNAs involved in cell proliferation.</text>
</comment>
<comment type="subunit">
    <text evidence="1">Component of the eukaryotic translation initiation factor 3 (eIF-3) complex. The eIF-3 complex interacts with pix.</text>
</comment>
<comment type="subcellular location">
    <subcellularLocation>
        <location evidence="1">Cytoplasm</location>
    </subcellularLocation>
</comment>
<comment type="similarity">
    <text evidence="1">Belongs to the eIF-3 subunit A family.</text>
</comment>
<name>EIF3A_DROYA</name>
<keyword id="KW-0963">Cytoplasm</keyword>
<keyword id="KW-0396">Initiation factor</keyword>
<keyword id="KW-0597">Phosphoprotein</keyword>
<keyword id="KW-0648">Protein biosynthesis</keyword>
<keyword id="KW-0694">RNA-binding</keyword>
<proteinExistence type="inferred from homology"/>
<evidence type="ECO:0000255" key="1">
    <source>
        <dbReference type="HAMAP-Rule" id="MF_03000"/>
    </source>
</evidence>
<evidence type="ECO:0000255" key="2">
    <source>
        <dbReference type="PROSITE-ProRule" id="PRU01185"/>
    </source>
</evidence>
<evidence type="ECO:0000256" key="3">
    <source>
        <dbReference type="SAM" id="MobiDB-lite"/>
    </source>
</evidence>
<accession>B4PTS9</accession>
<reference key="1">
    <citation type="journal article" date="2007" name="Nature">
        <title>Evolution of genes and genomes on the Drosophila phylogeny.</title>
        <authorList>
            <consortium name="Drosophila 12 genomes consortium"/>
        </authorList>
    </citation>
    <scope>NUCLEOTIDE SEQUENCE [LARGE SCALE GENOMIC DNA]</scope>
    <source>
        <strain>Tai18E2 / Tucson 14021-0261.01</strain>
    </source>
</reference>
<protein>
    <recommendedName>
        <fullName evidence="1">Eukaryotic translation initiation factor 3 subunit A</fullName>
        <shortName evidence="1">eIF3a</shortName>
    </recommendedName>
    <alternativeName>
        <fullName evidence="1">Eukaryotic translation initiation factor 3 subunit 10</fullName>
    </alternativeName>
</protein>
<gene>
    <name evidence="1" type="primary">eIF3a</name>
    <name evidence="1" type="synonym">eIF3-S10</name>
    <name type="ORF">GE25350</name>
</gene>
<organism>
    <name type="scientific">Drosophila yakuba</name>
    <name type="common">Fruit fly</name>
    <dbReference type="NCBI Taxonomy" id="7245"/>
    <lineage>
        <taxon>Eukaryota</taxon>
        <taxon>Metazoa</taxon>
        <taxon>Ecdysozoa</taxon>
        <taxon>Arthropoda</taxon>
        <taxon>Hexapoda</taxon>
        <taxon>Insecta</taxon>
        <taxon>Pterygota</taxon>
        <taxon>Neoptera</taxon>
        <taxon>Endopterygota</taxon>
        <taxon>Diptera</taxon>
        <taxon>Brachycera</taxon>
        <taxon>Muscomorpha</taxon>
        <taxon>Ephydroidea</taxon>
        <taxon>Drosophilidae</taxon>
        <taxon>Drosophila</taxon>
        <taxon>Sophophora</taxon>
    </lineage>
</organism>